<reference key="1">
    <citation type="journal article" date="2004" name="Nat. Biotechnol.">
        <title>Complete genome sequence of the metabolically versatile photosynthetic bacterium Rhodopseudomonas palustris.</title>
        <authorList>
            <person name="Larimer F.W."/>
            <person name="Chain P."/>
            <person name="Hauser L."/>
            <person name="Lamerdin J.E."/>
            <person name="Malfatti S."/>
            <person name="Do L."/>
            <person name="Land M.L."/>
            <person name="Pelletier D.A."/>
            <person name="Beatty J.T."/>
            <person name="Lang A.S."/>
            <person name="Tabita F.R."/>
            <person name="Gibson J.L."/>
            <person name="Hanson T.E."/>
            <person name="Bobst C."/>
            <person name="Torres y Torres J.L."/>
            <person name="Peres C."/>
            <person name="Harrison F.H."/>
            <person name="Gibson J."/>
            <person name="Harwood C.S."/>
        </authorList>
    </citation>
    <scope>NUCLEOTIDE SEQUENCE [LARGE SCALE GENOMIC DNA]</scope>
    <source>
        <strain>ATCC BAA-98 / CGA009</strain>
    </source>
</reference>
<sequence>MRDRRSSYEYEDLLACGRGELFGAGNAQLPLPPMLMFDRITTITEDGGEFGKGHVRAELDVNPDLWFFACHFKNDPVMPGCLGLDAMWQMVGFFLGWVGGEGPGRALGLGELKFTGQVLPNISKVVYNVDIKRVMRSKLWLGIADGWLSADDEIIYRAKDLKVGLFKQTAQPVAG</sequence>
<organism>
    <name type="scientific">Rhodopseudomonas palustris (strain ATCC BAA-98 / CGA009)</name>
    <dbReference type="NCBI Taxonomy" id="258594"/>
    <lineage>
        <taxon>Bacteria</taxon>
        <taxon>Pseudomonadati</taxon>
        <taxon>Pseudomonadota</taxon>
        <taxon>Alphaproteobacteria</taxon>
        <taxon>Hyphomicrobiales</taxon>
        <taxon>Nitrobacteraceae</taxon>
        <taxon>Rhodopseudomonas</taxon>
    </lineage>
</organism>
<feature type="chain" id="PRO_0000091611" description="3-hydroxydecanoyl-[acyl-carrier-protein] dehydratase">
    <location>
        <begin position="1"/>
        <end position="175"/>
    </location>
</feature>
<feature type="active site" evidence="1">
    <location>
        <position position="71"/>
    </location>
</feature>
<dbReference type="EC" id="4.2.1.59" evidence="1"/>
<dbReference type="EC" id="5.3.3.14" evidence="1"/>
<dbReference type="EMBL" id="BX572594">
    <property type="protein sequence ID" value="CAE25869.1"/>
    <property type="molecule type" value="Genomic_DNA"/>
</dbReference>
<dbReference type="RefSeq" id="WP_011155993.1">
    <property type="nucleotide sequence ID" value="NZ_CP116810.1"/>
</dbReference>
<dbReference type="SMR" id="P61450"/>
<dbReference type="STRING" id="258594.RPA0425"/>
<dbReference type="GeneID" id="66891440"/>
<dbReference type="eggNOG" id="COG0764">
    <property type="taxonomic scope" value="Bacteria"/>
</dbReference>
<dbReference type="HOGENOM" id="CLU_097925_0_0_5"/>
<dbReference type="PhylomeDB" id="P61450"/>
<dbReference type="UniPathway" id="UPA00094"/>
<dbReference type="GO" id="GO:0005737">
    <property type="term" value="C:cytoplasm"/>
    <property type="evidence" value="ECO:0007669"/>
    <property type="project" value="UniProtKB-SubCell"/>
</dbReference>
<dbReference type="GO" id="GO:0019171">
    <property type="term" value="F:(3R)-hydroxyacyl-[acyl-carrier-protein] dehydratase activity"/>
    <property type="evidence" value="ECO:0007669"/>
    <property type="project" value="UniProtKB-UniRule"/>
</dbReference>
<dbReference type="GO" id="GO:0034017">
    <property type="term" value="F:trans-2-decenoyl-acyl-carrier-protein isomerase activity"/>
    <property type="evidence" value="ECO:0007669"/>
    <property type="project" value="UniProtKB-UniRule"/>
</dbReference>
<dbReference type="GO" id="GO:0006636">
    <property type="term" value="P:unsaturated fatty acid biosynthetic process"/>
    <property type="evidence" value="ECO:0007669"/>
    <property type="project" value="UniProtKB-UniRule"/>
</dbReference>
<dbReference type="CDD" id="cd01287">
    <property type="entry name" value="FabA"/>
    <property type="match status" value="1"/>
</dbReference>
<dbReference type="Gene3D" id="3.10.129.10">
    <property type="entry name" value="Hotdog Thioesterase"/>
    <property type="match status" value="1"/>
</dbReference>
<dbReference type="HAMAP" id="MF_00405">
    <property type="entry name" value="FabA"/>
    <property type="match status" value="1"/>
</dbReference>
<dbReference type="InterPro" id="IPR010083">
    <property type="entry name" value="FabA"/>
</dbReference>
<dbReference type="InterPro" id="IPR013114">
    <property type="entry name" value="FabA_FabZ"/>
</dbReference>
<dbReference type="InterPro" id="IPR029069">
    <property type="entry name" value="HotDog_dom_sf"/>
</dbReference>
<dbReference type="NCBIfam" id="TIGR01749">
    <property type="entry name" value="fabA"/>
    <property type="match status" value="1"/>
</dbReference>
<dbReference type="NCBIfam" id="NF003509">
    <property type="entry name" value="PRK05174.1"/>
    <property type="match status" value="1"/>
</dbReference>
<dbReference type="PANTHER" id="PTHR30272">
    <property type="entry name" value="3-HYDROXYACYL-[ACYL-CARRIER-PROTEIN] DEHYDRATASE"/>
    <property type="match status" value="1"/>
</dbReference>
<dbReference type="PANTHER" id="PTHR30272:SF8">
    <property type="entry name" value="3-HYDROXYDECANOYL-[ACYL-CARRIER-PROTEIN] DEHYDRATASE"/>
    <property type="match status" value="1"/>
</dbReference>
<dbReference type="Pfam" id="PF07977">
    <property type="entry name" value="FabA"/>
    <property type="match status" value="1"/>
</dbReference>
<dbReference type="SUPFAM" id="SSF54637">
    <property type="entry name" value="Thioesterase/thiol ester dehydrase-isomerase"/>
    <property type="match status" value="1"/>
</dbReference>
<name>FABA_RHOPA</name>
<protein>
    <recommendedName>
        <fullName evidence="1">3-hydroxydecanoyl-[acyl-carrier-protein] dehydratase</fullName>
        <ecNumber evidence="1">4.2.1.59</ecNumber>
    </recommendedName>
    <alternativeName>
        <fullName evidence="1">3-hydroxyacyl-[acyl-carrier-protein] dehydratase FabA</fullName>
    </alternativeName>
    <alternativeName>
        <fullName evidence="1">Beta-hydroxydecanoyl thioester dehydrase</fullName>
    </alternativeName>
    <alternativeName>
        <fullName evidence="1">Trans-2-decenoyl-[acyl-carrier-protein] isomerase</fullName>
        <ecNumber evidence="1">5.3.3.14</ecNumber>
    </alternativeName>
</protein>
<comment type="function">
    <text evidence="1">Necessary for the introduction of cis unsaturation into fatty acids. Catalyzes the dehydration of (3R)-3-hydroxydecanoyl-ACP to E-(2)-decenoyl-ACP and then its isomerization to Z-(3)-decenoyl-ACP. Can catalyze the dehydratase reaction for beta-hydroxyacyl-ACPs with saturated chain lengths up to 16:0, being most active on intermediate chain length.</text>
</comment>
<comment type="catalytic activity">
    <reaction evidence="1">
        <text>a (3R)-hydroxyacyl-[ACP] = a (2E)-enoyl-[ACP] + H2O</text>
        <dbReference type="Rhea" id="RHEA:13097"/>
        <dbReference type="Rhea" id="RHEA-COMP:9925"/>
        <dbReference type="Rhea" id="RHEA-COMP:9945"/>
        <dbReference type="ChEBI" id="CHEBI:15377"/>
        <dbReference type="ChEBI" id="CHEBI:78784"/>
        <dbReference type="ChEBI" id="CHEBI:78827"/>
        <dbReference type="EC" id="4.2.1.59"/>
    </reaction>
</comment>
<comment type="catalytic activity">
    <reaction evidence="1">
        <text>(3R)-hydroxydecanoyl-[ACP] = (2E)-decenoyl-[ACP] + H2O</text>
        <dbReference type="Rhea" id="RHEA:41860"/>
        <dbReference type="Rhea" id="RHEA-COMP:9638"/>
        <dbReference type="Rhea" id="RHEA-COMP:9639"/>
        <dbReference type="ChEBI" id="CHEBI:15377"/>
        <dbReference type="ChEBI" id="CHEBI:78466"/>
        <dbReference type="ChEBI" id="CHEBI:78467"/>
    </reaction>
</comment>
<comment type="catalytic activity">
    <reaction evidence="1">
        <text>(2E)-decenoyl-[ACP] = (3Z)-decenoyl-[ACP]</text>
        <dbReference type="Rhea" id="RHEA:23568"/>
        <dbReference type="Rhea" id="RHEA-COMP:9639"/>
        <dbReference type="Rhea" id="RHEA-COMP:9927"/>
        <dbReference type="ChEBI" id="CHEBI:78467"/>
        <dbReference type="ChEBI" id="CHEBI:78798"/>
        <dbReference type="EC" id="5.3.3.14"/>
    </reaction>
</comment>
<comment type="pathway">
    <text evidence="1">Lipid metabolism; fatty acid biosynthesis.</text>
</comment>
<comment type="subunit">
    <text evidence="1">Homodimer.</text>
</comment>
<comment type="subcellular location">
    <subcellularLocation>
        <location evidence="1">Cytoplasm</location>
    </subcellularLocation>
</comment>
<comment type="similarity">
    <text evidence="1">Belongs to the thioester dehydratase family. FabA subfamily.</text>
</comment>
<evidence type="ECO:0000255" key="1">
    <source>
        <dbReference type="HAMAP-Rule" id="MF_00405"/>
    </source>
</evidence>
<accession>P61450</accession>
<proteinExistence type="inferred from homology"/>
<keyword id="KW-0963">Cytoplasm</keyword>
<keyword id="KW-0275">Fatty acid biosynthesis</keyword>
<keyword id="KW-0276">Fatty acid metabolism</keyword>
<keyword id="KW-0413">Isomerase</keyword>
<keyword id="KW-0444">Lipid biosynthesis</keyword>
<keyword id="KW-0443">Lipid metabolism</keyword>
<keyword id="KW-0456">Lyase</keyword>
<gene>
    <name evidence="1" type="primary">fabA</name>
    <name type="ordered locus">RPA0425</name>
</gene>